<feature type="chain" id="PRO_1000099548" description="UvrABC system protein B">
    <location>
        <begin position="1"/>
        <end position="673"/>
    </location>
</feature>
<feature type="domain" description="Helicase ATP-binding" evidence="1">
    <location>
        <begin position="26"/>
        <end position="183"/>
    </location>
</feature>
<feature type="domain" description="Helicase C-terminal" evidence="1">
    <location>
        <begin position="431"/>
        <end position="597"/>
    </location>
</feature>
<feature type="domain" description="UVR" evidence="1">
    <location>
        <begin position="633"/>
        <end position="668"/>
    </location>
</feature>
<feature type="region of interest" description="Disordered" evidence="2">
    <location>
        <begin position="608"/>
        <end position="627"/>
    </location>
</feature>
<feature type="short sequence motif" description="Beta-hairpin">
    <location>
        <begin position="92"/>
        <end position="115"/>
    </location>
</feature>
<feature type="binding site" evidence="1">
    <location>
        <begin position="39"/>
        <end position="46"/>
    </location>
    <ligand>
        <name>ATP</name>
        <dbReference type="ChEBI" id="CHEBI:30616"/>
    </ligand>
</feature>
<protein>
    <recommendedName>
        <fullName evidence="1">UvrABC system protein B</fullName>
        <shortName evidence="1">Protein UvrB</shortName>
    </recommendedName>
    <alternativeName>
        <fullName evidence="1">Excinuclease ABC subunit B</fullName>
    </alternativeName>
</protein>
<gene>
    <name evidence="1" type="primary">uvrB</name>
    <name type="ordered locus">ECH74115_0927</name>
</gene>
<dbReference type="EMBL" id="CP001164">
    <property type="protein sequence ID" value="ACI37185.1"/>
    <property type="molecule type" value="Genomic_DNA"/>
</dbReference>
<dbReference type="RefSeq" id="WP_000042533.1">
    <property type="nucleotide sequence ID" value="NC_011353.1"/>
</dbReference>
<dbReference type="SMR" id="B5YRL8"/>
<dbReference type="GeneID" id="93776651"/>
<dbReference type="KEGG" id="ecf:ECH74115_0927"/>
<dbReference type="HOGENOM" id="CLU_009621_2_1_6"/>
<dbReference type="GO" id="GO:0005737">
    <property type="term" value="C:cytoplasm"/>
    <property type="evidence" value="ECO:0007669"/>
    <property type="project" value="UniProtKB-SubCell"/>
</dbReference>
<dbReference type="GO" id="GO:0009380">
    <property type="term" value="C:excinuclease repair complex"/>
    <property type="evidence" value="ECO:0007669"/>
    <property type="project" value="InterPro"/>
</dbReference>
<dbReference type="GO" id="GO:0005524">
    <property type="term" value="F:ATP binding"/>
    <property type="evidence" value="ECO:0007669"/>
    <property type="project" value="UniProtKB-UniRule"/>
</dbReference>
<dbReference type="GO" id="GO:0016887">
    <property type="term" value="F:ATP hydrolysis activity"/>
    <property type="evidence" value="ECO:0007669"/>
    <property type="project" value="InterPro"/>
</dbReference>
<dbReference type="GO" id="GO:0003677">
    <property type="term" value="F:DNA binding"/>
    <property type="evidence" value="ECO:0007669"/>
    <property type="project" value="UniProtKB-UniRule"/>
</dbReference>
<dbReference type="GO" id="GO:0009381">
    <property type="term" value="F:excinuclease ABC activity"/>
    <property type="evidence" value="ECO:0007669"/>
    <property type="project" value="UniProtKB-UniRule"/>
</dbReference>
<dbReference type="GO" id="GO:0004386">
    <property type="term" value="F:helicase activity"/>
    <property type="evidence" value="ECO:0007669"/>
    <property type="project" value="UniProtKB-KW"/>
</dbReference>
<dbReference type="GO" id="GO:0006289">
    <property type="term" value="P:nucleotide-excision repair"/>
    <property type="evidence" value="ECO:0007669"/>
    <property type="project" value="UniProtKB-UniRule"/>
</dbReference>
<dbReference type="GO" id="GO:0009432">
    <property type="term" value="P:SOS response"/>
    <property type="evidence" value="ECO:0007669"/>
    <property type="project" value="UniProtKB-UniRule"/>
</dbReference>
<dbReference type="CDD" id="cd17916">
    <property type="entry name" value="DEXHc_UvrB"/>
    <property type="match status" value="1"/>
</dbReference>
<dbReference type="CDD" id="cd18790">
    <property type="entry name" value="SF2_C_UvrB"/>
    <property type="match status" value="1"/>
</dbReference>
<dbReference type="FunFam" id="3.40.50.300:FF:000257">
    <property type="entry name" value="UvrABC system protein B"/>
    <property type="match status" value="1"/>
</dbReference>
<dbReference type="FunFam" id="3.40.50.300:FF:000401">
    <property type="entry name" value="UvrABC system protein B"/>
    <property type="match status" value="1"/>
</dbReference>
<dbReference type="FunFam" id="3.40.50.300:FF:000477">
    <property type="entry name" value="UvrABC system protein B"/>
    <property type="match status" value="1"/>
</dbReference>
<dbReference type="Gene3D" id="3.40.50.300">
    <property type="entry name" value="P-loop containing nucleotide triphosphate hydrolases"/>
    <property type="match status" value="3"/>
</dbReference>
<dbReference type="Gene3D" id="4.10.860.10">
    <property type="entry name" value="UVR domain"/>
    <property type="match status" value="1"/>
</dbReference>
<dbReference type="HAMAP" id="MF_00204">
    <property type="entry name" value="UvrB"/>
    <property type="match status" value="1"/>
</dbReference>
<dbReference type="InterPro" id="IPR006935">
    <property type="entry name" value="Helicase/UvrB_N"/>
</dbReference>
<dbReference type="InterPro" id="IPR014001">
    <property type="entry name" value="Helicase_ATP-bd"/>
</dbReference>
<dbReference type="InterPro" id="IPR001650">
    <property type="entry name" value="Helicase_C-like"/>
</dbReference>
<dbReference type="InterPro" id="IPR027417">
    <property type="entry name" value="P-loop_NTPase"/>
</dbReference>
<dbReference type="InterPro" id="IPR001943">
    <property type="entry name" value="UVR_dom"/>
</dbReference>
<dbReference type="InterPro" id="IPR036876">
    <property type="entry name" value="UVR_dom_sf"/>
</dbReference>
<dbReference type="InterPro" id="IPR004807">
    <property type="entry name" value="UvrB"/>
</dbReference>
<dbReference type="InterPro" id="IPR041471">
    <property type="entry name" value="UvrB_inter"/>
</dbReference>
<dbReference type="InterPro" id="IPR024759">
    <property type="entry name" value="UvrB_YAD/RRR_dom"/>
</dbReference>
<dbReference type="NCBIfam" id="NF003673">
    <property type="entry name" value="PRK05298.1"/>
    <property type="match status" value="1"/>
</dbReference>
<dbReference type="NCBIfam" id="TIGR00631">
    <property type="entry name" value="uvrb"/>
    <property type="match status" value="1"/>
</dbReference>
<dbReference type="PANTHER" id="PTHR24029">
    <property type="entry name" value="UVRABC SYSTEM PROTEIN B"/>
    <property type="match status" value="1"/>
</dbReference>
<dbReference type="PANTHER" id="PTHR24029:SF0">
    <property type="entry name" value="UVRABC SYSTEM PROTEIN B"/>
    <property type="match status" value="1"/>
</dbReference>
<dbReference type="Pfam" id="PF00271">
    <property type="entry name" value="Helicase_C"/>
    <property type="match status" value="1"/>
</dbReference>
<dbReference type="Pfam" id="PF04851">
    <property type="entry name" value="ResIII"/>
    <property type="match status" value="1"/>
</dbReference>
<dbReference type="Pfam" id="PF02151">
    <property type="entry name" value="UVR"/>
    <property type="match status" value="1"/>
</dbReference>
<dbReference type="Pfam" id="PF12344">
    <property type="entry name" value="UvrB"/>
    <property type="match status" value="1"/>
</dbReference>
<dbReference type="Pfam" id="PF17757">
    <property type="entry name" value="UvrB_inter"/>
    <property type="match status" value="1"/>
</dbReference>
<dbReference type="SMART" id="SM00487">
    <property type="entry name" value="DEXDc"/>
    <property type="match status" value="1"/>
</dbReference>
<dbReference type="SMART" id="SM00490">
    <property type="entry name" value="HELICc"/>
    <property type="match status" value="1"/>
</dbReference>
<dbReference type="SUPFAM" id="SSF46600">
    <property type="entry name" value="C-terminal UvrC-binding domain of UvrB"/>
    <property type="match status" value="1"/>
</dbReference>
<dbReference type="SUPFAM" id="SSF52540">
    <property type="entry name" value="P-loop containing nucleoside triphosphate hydrolases"/>
    <property type="match status" value="2"/>
</dbReference>
<dbReference type="PROSITE" id="PS51192">
    <property type="entry name" value="HELICASE_ATP_BIND_1"/>
    <property type="match status" value="1"/>
</dbReference>
<dbReference type="PROSITE" id="PS51194">
    <property type="entry name" value="HELICASE_CTER"/>
    <property type="match status" value="1"/>
</dbReference>
<dbReference type="PROSITE" id="PS50151">
    <property type="entry name" value="UVR"/>
    <property type="match status" value="1"/>
</dbReference>
<sequence>MSKPFKLNSAFKPSGDQPEAIRRLEEGLEDGLAHQTLLGVTGSGKTFTIANVIADLQRPTMVLAPNKTLAAQLYGEMKEFFPENAVEYFVSYYDYYQPEAYVPSSDTFIEKDASVNEHIEQMRLSATKAMLERRDVVVVASVSAIYGLGDPDLYLKMMLHLTVGMIIDQRAILRRLAELQYARNDQAFQRGTFRVRGEVIDIFPAESDDIALRVELFDEEVERLSLFDPLTGQIVSTIPRFTIYPKTHYVTPRERIVQAMEEIKEELAARRKVLLENNKLLEEQRLTQRTQFDLEMMNELGYCSGIENYSRFLSGRGPGEPPPTLFDYLPADGLLVVDESHVTIPQIGGMYRGDRARKETLVEYGFRLPSALDNRPLKFEEFEALAPQTIYVSATPGNYELEKSGGDVVDQVVRPTGLLDPIIEVRPVATQVDDLLSEIRQRAAINERVLVTTLTKRMAEDLTEYLEEHGERVRYLHSDIDTVERMEIIRDLRLGEFDVLVGINLLREGLDMPEVSLVAILDADKEGFLRSERSLIQTIGRAARNVNGKAILYGDKITPSMAKAIGETERRREKQQKYNEEHGITPQGLNKKVVDILALGQNIAKTKAKGRGKSRPIVEPDNVPMDMSPKALQQKIHELEGLMMQHAQNLEFEEAAQIRDQLHQLRELFIAAS</sequence>
<proteinExistence type="inferred from homology"/>
<accession>B5YRL8</accession>
<comment type="function">
    <text evidence="1">The UvrABC repair system catalyzes the recognition and processing of DNA lesions. A damage recognition complex composed of 2 UvrA and 2 UvrB subunits scans DNA for abnormalities. Upon binding of the UvrA(2)B(2) complex to a putative damaged site, the DNA wraps around one UvrB monomer. DNA wrap is dependent on ATP binding by UvrB and probably causes local melting of the DNA helix, facilitating insertion of UvrB beta-hairpin between the DNA strands. Then UvrB probes one DNA strand for the presence of a lesion. If a lesion is found the UvrA subunits dissociate and the UvrB-DNA preincision complex is formed. This complex is subsequently bound by UvrC and the second UvrB is released. If no lesion is found, the DNA wraps around the other UvrB subunit that will check the other stand for damage.</text>
</comment>
<comment type="subunit">
    <text evidence="1">Forms a heterotetramer with UvrA during the search for lesions. Interacts with UvrC in an incision complex.</text>
</comment>
<comment type="subcellular location">
    <subcellularLocation>
        <location evidence="1">Cytoplasm</location>
    </subcellularLocation>
</comment>
<comment type="domain">
    <text evidence="1">The beta-hairpin motif is involved in DNA binding.</text>
</comment>
<comment type="similarity">
    <text evidence="1">Belongs to the UvrB family.</text>
</comment>
<evidence type="ECO:0000255" key="1">
    <source>
        <dbReference type="HAMAP-Rule" id="MF_00204"/>
    </source>
</evidence>
<evidence type="ECO:0000256" key="2">
    <source>
        <dbReference type="SAM" id="MobiDB-lite"/>
    </source>
</evidence>
<keyword id="KW-0067">ATP-binding</keyword>
<keyword id="KW-0963">Cytoplasm</keyword>
<keyword id="KW-0227">DNA damage</keyword>
<keyword id="KW-0228">DNA excision</keyword>
<keyword id="KW-0234">DNA repair</keyword>
<keyword id="KW-0267">Excision nuclease</keyword>
<keyword id="KW-0347">Helicase</keyword>
<keyword id="KW-0378">Hydrolase</keyword>
<keyword id="KW-0547">Nucleotide-binding</keyword>
<keyword id="KW-0742">SOS response</keyword>
<name>UVRB_ECO5E</name>
<organism>
    <name type="scientific">Escherichia coli O157:H7 (strain EC4115 / EHEC)</name>
    <dbReference type="NCBI Taxonomy" id="444450"/>
    <lineage>
        <taxon>Bacteria</taxon>
        <taxon>Pseudomonadati</taxon>
        <taxon>Pseudomonadota</taxon>
        <taxon>Gammaproteobacteria</taxon>
        <taxon>Enterobacterales</taxon>
        <taxon>Enterobacteriaceae</taxon>
        <taxon>Escherichia</taxon>
    </lineage>
</organism>
<reference key="1">
    <citation type="journal article" date="2011" name="Proc. Natl. Acad. Sci. U.S.A.">
        <title>Genomic anatomy of Escherichia coli O157:H7 outbreaks.</title>
        <authorList>
            <person name="Eppinger M."/>
            <person name="Mammel M.K."/>
            <person name="Leclerc J.E."/>
            <person name="Ravel J."/>
            <person name="Cebula T.A."/>
        </authorList>
    </citation>
    <scope>NUCLEOTIDE SEQUENCE [LARGE SCALE GENOMIC DNA]</scope>
    <source>
        <strain>EC4115 / EHEC</strain>
    </source>
</reference>